<reference key="1">
    <citation type="journal article" date="2008" name="Plant J.">
        <title>The multiple phenylpropene synthases in both Clarkia breweri and Petunia hybrida represent two distinct protein lineages.</title>
        <authorList>
            <person name="Koeduka T."/>
            <person name="Louie G.V."/>
            <person name="Orlova I."/>
            <person name="Kish C.M."/>
            <person name="Ibdah M."/>
            <person name="Wilkerson C.G."/>
            <person name="Bowman M.E."/>
            <person name="Baiga T.J."/>
            <person name="Noel J.P."/>
            <person name="Dudareva N."/>
            <person name="Pichersky E."/>
        </authorList>
    </citation>
    <scope>NUCLEOTIDE SEQUENCE [MRNA]</scope>
    <scope>FUNCTION</scope>
    <scope>MUTAGENESIS OF PHE-86 AND ILE-89</scope>
    <scope>CATALYTIC ACTIVITY</scope>
    <scope>PATHWAY</scope>
    <scope>TISSUE SPECIFICITY</scope>
    <scope>BIOPHYSICOCHEMICAL PROPERTIES</scope>
    <scope>GENE FAMILY</scope>
    <scope>NOMENCLATURE</scope>
</reference>
<name>EGS2_CLABR</name>
<comment type="function">
    <text evidence="3">Catalyzes the synthesis of the phenylpropene eugenol from coniferyl acetate (PubMed:18208524). Phenylpropenes are produced by plants as defense compounds with antimicrobial and antianimal properties, or as floral attractants of pollinators (PubMed:18208524).</text>
</comment>
<comment type="catalytic activity">
    <reaction evidence="3">
        <text>eugenol + a carboxylate + NADP(+) = a coniferyl ester + NADPH</text>
        <dbReference type="Rhea" id="RHEA:32655"/>
        <dbReference type="ChEBI" id="CHEBI:4917"/>
        <dbReference type="ChEBI" id="CHEBI:29067"/>
        <dbReference type="ChEBI" id="CHEBI:57783"/>
        <dbReference type="ChEBI" id="CHEBI:58349"/>
        <dbReference type="ChEBI" id="CHEBI:64292"/>
        <dbReference type="EC" id="1.1.1.318"/>
    </reaction>
    <physiologicalReaction direction="right-to-left" evidence="3">
        <dbReference type="Rhea" id="RHEA:32657"/>
    </physiologicalReaction>
</comment>
<comment type="catalytic activity">
    <reaction evidence="3">
        <text>eugenol + acetate + NADP(+) = (E)-coniferyl acetate + NADPH</text>
        <dbReference type="Rhea" id="RHEA:24690"/>
        <dbReference type="ChEBI" id="CHEBI:4917"/>
        <dbReference type="ChEBI" id="CHEBI:30089"/>
        <dbReference type="ChEBI" id="CHEBI:47905"/>
        <dbReference type="ChEBI" id="CHEBI:57783"/>
        <dbReference type="ChEBI" id="CHEBI:58349"/>
        <dbReference type="EC" id="1.1.1.318"/>
    </reaction>
    <physiologicalReaction direction="right-to-left" evidence="3">
        <dbReference type="Rhea" id="RHEA:24692"/>
    </physiologicalReaction>
</comment>
<comment type="biophysicochemical properties">
    <kinetics>
        <KM evidence="3">310.5 uM for coniferyl acetate</KM>
        <Vmax evidence="3">6.9 nmol/sec/mg enzyme with coniferyl acetate as substrate</Vmax>
        <text evidence="3">kcat is 0.25 sec(-1) with coniferyl acetate as substrate.</text>
    </kinetics>
</comment>
<comment type="pathway">
    <text evidence="3">Aromatic compound metabolism; phenylpropanoid biosynthesis.</text>
</comment>
<comment type="tissue specificity">
    <text evidence="3">Mostly expressed in petals, and, to a lower extent, in sepals, stamens and pistils.</text>
</comment>
<comment type="similarity">
    <text evidence="5">Belongs to the NmrA-type oxidoreductase family.</text>
</comment>
<protein>
    <recommendedName>
        <fullName evidence="4">Eugenol synthase 2</fullName>
        <shortName evidence="4">CbEGS2</shortName>
        <ecNumber evidence="3">1.1.1.318</ecNumber>
    </recommendedName>
</protein>
<evidence type="ECO:0000250" key="1">
    <source>
        <dbReference type="UniProtKB" id="D0VWT0"/>
    </source>
</evidence>
<evidence type="ECO:0000250" key="2">
    <source>
        <dbReference type="UniProtKB" id="Q15GI4"/>
    </source>
</evidence>
<evidence type="ECO:0000269" key="3">
    <source>
    </source>
</evidence>
<evidence type="ECO:0000303" key="4">
    <source>
    </source>
</evidence>
<evidence type="ECO:0000305" key="5"/>
<dbReference type="EC" id="1.1.1.318" evidence="3"/>
<dbReference type="EMBL" id="EF467240">
    <property type="protein sequence ID" value="ABR24114.1"/>
    <property type="molecule type" value="mRNA"/>
</dbReference>
<dbReference type="SMR" id="B2WSN0"/>
<dbReference type="BioCyc" id="MetaCyc:MONOMER-13843"/>
<dbReference type="UniPathway" id="UPA00711"/>
<dbReference type="GO" id="GO:0000166">
    <property type="term" value="F:nucleotide binding"/>
    <property type="evidence" value="ECO:0007669"/>
    <property type="project" value="UniProtKB-KW"/>
</dbReference>
<dbReference type="GO" id="GO:0016491">
    <property type="term" value="F:oxidoreductase activity"/>
    <property type="evidence" value="ECO:0007669"/>
    <property type="project" value="UniProtKB-KW"/>
</dbReference>
<dbReference type="GO" id="GO:0009699">
    <property type="term" value="P:phenylpropanoid biosynthetic process"/>
    <property type="evidence" value="ECO:0007669"/>
    <property type="project" value="UniProtKB-UniPathway"/>
</dbReference>
<dbReference type="CDD" id="cd05259">
    <property type="entry name" value="PCBER_SDR_a"/>
    <property type="match status" value="1"/>
</dbReference>
<dbReference type="Gene3D" id="3.40.50.720">
    <property type="entry name" value="NAD(P)-binding Rossmann-like Domain"/>
    <property type="match status" value="1"/>
</dbReference>
<dbReference type="Gene3D" id="3.90.25.10">
    <property type="entry name" value="UDP-galactose 4-epimerase, domain 1"/>
    <property type="match status" value="1"/>
</dbReference>
<dbReference type="InterPro" id="IPR036291">
    <property type="entry name" value="NAD(P)-bd_dom_sf"/>
</dbReference>
<dbReference type="InterPro" id="IPR008030">
    <property type="entry name" value="NmrA-like"/>
</dbReference>
<dbReference type="InterPro" id="IPR050608">
    <property type="entry name" value="NmrA-type/Isoflavone_red_sf"/>
</dbReference>
<dbReference type="InterPro" id="IPR045312">
    <property type="entry name" value="PCBER-like"/>
</dbReference>
<dbReference type="PANTHER" id="PTHR43349:SF93">
    <property type="entry name" value="ISOFLAVONE REDUCTASE HOMOLOG P3-RELATED"/>
    <property type="match status" value="1"/>
</dbReference>
<dbReference type="PANTHER" id="PTHR43349">
    <property type="entry name" value="PINORESINOL REDUCTASE-RELATED"/>
    <property type="match status" value="1"/>
</dbReference>
<dbReference type="Pfam" id="PF05368">
    <property type="entry name" value="NmrA"/>
    <property type="match status" value="1"/>
</dbReference>
<dbReference type="SUPFAM" id="SSF51735">
    <property type="entry name" value="NAD(P)-binding Rossmann-fold domains"/>
    <property type="match status" value="1"/>
</dbReference>
<keyword id="KW-0521">NADP</keyword>
<keyword id="KW-0547">Nucleotide-binding</keyword>
<keyword id="KW-0560">Oxidoreductase</keyword>
<keyword id="KW-0587">Phenylpropanoid metabolism</keyword>
<sequence>MGSKSKILIIGGTGYIGKFIVEASVKEGHPTFALVRETTVSDPVKGKLVEKFQNLGVSLLYGDLYDHDSLVKAIKQVDVVISTVGFMQIADQTKIIAAIKEAGNVKRFFPSEFGNDVDHVNAVEPAKSVAFAVKANIRRAVEAEGIPYTYVASNCFNGYFLPTLVQPGATTPPRDKVIIPGDGNPKAIFNKEEDIGTYTIKAVDDPRTLNKILYLRPSNNIYSFNELVALWEKKIGKTLEKIYVPEEQILKDIQEAPIPINIFLGINHSVFVKGDHTNFEIEPSFGVEASELYPEVKYTTVEEYLDQFV</sequence>
<proteinExistence type="evidence at protein level"/>
<accession>B2WSN0</accession>
<organism>
    <name type="scientific">Clarkia breweri</name>
    <name type="common">Fairy fans</name>
    <name type="synonym">Eucharidium breweri</name>
    <dbReference type="NCBI Taxonomy" id="36903"/>
    <lineage>
        <taxon>Eukaryota</taxon>
        <taxon>Viridiplantae</taxon>
        <taxon>Streptophyta</taxon>
        <taxon>Embryophyta</taxon>
        <taxon>Tracheophyta</taxon>
        <taxon>Spermatophyta</taxon>
        <taxon>Magnoliopsida</taxon>
        <taxon>eudicotyledons</taxon>
        <taxon>Gunneridae</taxon>
        <taxon>Pentapetalae</taxon>
        <taxon>rosids</taxon>
        <taxon>malvids</taxon>
        <taxon>Myrtales</taxon>
        <taxon>Onagraceae</taxon>
        <taxon>Onagroideae</taxon>
        <taxon>Onagreae</taxon>
        <taxon>Clarkia</taxon>
    </lineage>
</organism>
<feature type="chain" id="PRO_0000451499" description="Eugenol synthase 2">
    <location>
        <begin position="1"/>
        <end position="309"/>
    </location>
</feature>
<feature type="active site" description="Proton donor/acceptor" evidence="2">
    <location>
        <position position="134"/>
    </location>
</feature>
<feature type="binding site" evidence="1">
    <location>
        <begin position="13"/>
        <end position="16"/>
    </location>
    <ligand>
        <name>NADP(+)</name>
        <dbReference type="ChEBI" id="CHEBI:58349"/>
    </ligand>
</feature>
<feature type="binding site" evidence="2">
    <location>
        <begin position="35"/>
        <end position="45"/>
    </location>
    <ligand>
        <name>NADP(+)</name>
        <dbReference type="ChEBI" id="CHEBI:58349"/>
    </ligand>
</feature>
<feature type="binding site" evidence="1">
    <location>
        <position position="36"/>
    </location>
    <ligand>
        <name>NADP(+)</name>
        <dbReference type="ChEBI" id="CHEBI:58349"/>
    </ligand>
</feature>
<feature type="binding site" evidence="2">
    <location>
        <begin position="86"/>
        <end position="88"/>
    </location>
    <ligand>
        <name>NADP(+)</name>
        <dbReference type="ChEBI" id="CHEBI:58349"/>
    </ligand>
</feature>
<feature type="binding site" evidence="1">
    <location>
        <begin position="111"/>
        <end position="113"/>
    </location>
    <ligand>
        <name>NADP(+)</name>
        <dbReference type="ChEBI" id="CHEBI:58349"/>
    </ligand>
</feature>
<feature type="binding site" evidence="1">
    <location>
        <position position="134"/>
    </location>
    <ligand>
        <name>NADP(+)</name>
        <dbReference type="ChEBI" id="CHEBI:58349"/>
    </ligand>
</feature>
<feature type="binding site" evidence="1">
    <location>
        <begin position="154"/>
        <end position="156"/>
    </location>
    <ligand>
        <name>NADP(+)</name>
        <dbReference type="ChEBI" id="CHEBI:58349"/>
    </ligand>
</feature>
<feature type="site" description="Confers substrate specificity" evidence="3">
    <location>
        <position position="86"/>
    </location>
</feature>
<feature type="site" description="Confers substrate specificity" evidence="3">
    <location>
        <position position="89"/>
    </location>
</feature>
<feature type="site" description="Required for activity" evidence="2">
    <location>
        <position position="266"/>
    </location>
</feature>
<feature type="mutagenesis site" description="Confers some isoeugenol synthase activity; when associated with Y-89." evidence="3">
    <original>F</original>
    <variation>V</variation>
    <location>
        <position position="86"/>
    </location>
</feature>
<feature type="mutagenesis site" description="Confers some isoeugenol synthase activity; when associated with V-86." evidence="3">
    <original>I</original>
    <variation>Y</variation>
    <location>
        <position position="89"/>
    </location>
</feature>
<gene>
    <name evidence="4" type="primary">EGS2</name>
</gene>